<dbReference type="EC" id="2.2.1.9" evidence="1"/>
<dbReference type="EMBL" id="CP000243">
    <property type="protein sequence ID" value="ABE08015.1"/>
    <property type="status" value="ALT_INIT"/>
    <property type="molecule type" value="Genomic_DNA"/>
</dbReference>
<dbReference type="RefSeq" id="WP_024250947.1">
    <property type="nucleotide sequence ID" value="NZ_CP064825.1"/>
</dbReference>
<dbReference type="SMR" id="Q1R9E9"/>
<dbReference type="KEGG" id="eci:UTI89_C2548"/>
<dbReference type="HOGENOM" id="CLU_006051_3_0_6"/>
<dbReference type="UniPathway" id="UPA00079"/>
<dbReference type="UniPathway" id="UPA01057">
    <property type="reaction ID" value="UER00164"/>
</dbReference>
<dbReference type="Proteomes" id="UP000001952">
    <property type="component" value="Chromosome"/>
</dbReference>
<dbReference type="GO" id="GO:0070204">
    <property type="term" value="F:2-succinyl-5-enolpyruvyl-6-hydroxy-3-cyclohexene-1-carboxylic-acid synthase activity"/>
    <property type="evidence" value="ECO:0007669"/>
    <property type="project" value="UniProtKB-UniRule"/>
</dbReference>
<dbReference type="GO" id="GO:0000287">
    <property type="term" value="F:magnesium ion binding"/>
    <property type="evidence" value="ECO:0007669"/>
    <property type="project" value="UniProtKB-UniRule"/>
</dbReference>
<dbReference type="GO" id="GO:0030145">
    <property type="term" value="F:manganese ion binding"/>
    <property type="evidence" value="ECO:0007669"/>
    <property type="project" value="UniProtKB-UniRule"/>
</dbReference>
<dbReference type="GO" id="GO:0030976">
    <property type="term" value="F:thiamine pyrophosphate binding"/>
    <property type="evidence" value="ECO:0007669"/>
    <property type="project" value="UniProtKB-UniRule"/>
</dbReference>
<dbReference type="GO" id="GO:0009234">
    <property type="term" value="P:menaquinone biosynthetic process"/>
    <property type="evidence" value="ECO:0007669"/>
    <property type="project" value="UniProtKB-UniRule"/>
</dbReference>
<dbReference type="CDD" id="cd07037">
    <property type="entry name" value="TPP_PYR_MenD"/>
    <property type="match status" value="1"/>
</dbReference>
<dbReference type="CDD" id="cd02009">
    <property type="entry name" value="TPP_SHCHC_synthase"/>
    <property type="match status" value="1"/>
</dbReference>
<dbReference type="FunFam" id="3.40.50.1220:FF:000010">
    <property type="entry name" value="2-succinyl-5-enolpyruvyl-6-hydroxy-3-cyclohexene-1-carboxylate synthase"/>
    <property type="match status" value="1"/>
</dbReference>
<dbReference type="FunFam" id="3.40.50.970:FF:000029">
    <property type="entry name" value="2-succinyl-5-enolpyruvyl-6-hydroxy-3-cyclohexene-1-carboxylate synthase"/>
    <property type="match status" value="1"/>
</dbReference>
<dbReference type="Gene3D" id="3.40.50.970">
    <property type="match status" value="2"/>
</dbReference>
<dbReference type="Gene3D" id="3.40.50.1220">
    <property type="entry name" value="TPP-binding domain"/>
    <property type="match status" value="1"/>
</dbReference>
<dbReference type="HAMAP" id="MF_01659">
    <property type="entry name" value="MenD"/>
    <property type="match status" value="1"/>
</dbReference>
<dbReference type="InterPro" id="IPR004433">
    <property type="entry name" value="MenaQ_synth_MenD"/>
</dbReference>
<dbReference type="InterPro" id="IPR032264">
    <property type="entry name" value="MenD_middle"/>
</dbReference>
<dbReference type="InterPro" id="IPR029061">
    <property type="entry name" value="THDP-binding"/>
</dbReference>
<dbReference type="InterPro" id="IPR012001">
    <property type="entry name" value="Thiamin_PyroP_enz_TPP-bd_dom"/>
</dbReference>
<dbReference type="InterPro" id="IPR011766">
    <property type="entry name" value="TPP_enzyme_TPP-bd"/>
</dbReference>
<dbReference type="NCBIfam" id="TIGR00173">
    <property type="entry name" value="menD"/>
    <property type="match status" value="1"/>
</dbReference>
<dbReference type="PANTHER" id="PTHR42916">
    <property type="entry name" value="2-SUCCINYL-5-ENOLPYRUVYL-6-HYDROXY-3-CYCLOHEXENE-1-CARBOXYLATE SYNTHASE"/>
    <property type="match status" value="1"/>
</dbReference>
<dbReference type="PANTHER" id="PTHR42916:SF1">
    <property type="entry name" value="PROTEIN PHYLLO, CHLOROPLASTIC"/>
    <property type="match status" value="1"/>
</dbReference>
<dbReference type="Pfam" id="PF02775">
    <property type="entry name" value="TPP_enzyme_C"/>
    <property type="match status" value="1"/>
</dbReference>
<dbReference type="Pfam" id="PF16582">
    <property type="entry name" value="TPP_enzyme_M_2"/>
    <property type="match status" value="1"/>
</dbReference>
<dbReference type="Pfam" id="PF02776">
    <property type="entry name" value="TPP_enzyme_N"/>
    <property type="match status" value="1"/>
</dbReference>
<dbReference type="PIRSF" id="PIRSF004983">
    <property type="entry name" value="MenD"/>
    <property type="match status" value="1"/>
</dbReference>
<dbReference type="SUPFAM" id="SSF52518">
    <property type="entry name" value="Thiamin diphosphate-binding fold (THDP-binding)"/>
    <property type="match status" value="2"/>
</dbReference>
<proteinExistence type="inferred from homology"/>
<comment type="function">
    <text evidence="1">Catalyzes the thiamine diphosphate-dependent decarboxylation of 2-oxoglutarate and the subsequent addition of the resulting succinic semialdehyde-thiamine pyrophosphate anion to isochorismate to yield 2-succinyl-5-enolpyruvyl-6-hydroxy-3-cyclohexene-1-carboxylate (SEPHCHC).</text>
</comment>
<comment type="catalytic activity">
    <reaction evidence="1">
        <text>isochorismate + 2-oxoglutarate + H(+) = 5-enolpyruvoyl-6-hydroxy-2-succinyl-cyclohex-3-ene-1-carboxylate + CO2</text>
        <dbReference type="Rhea" id="RHEA:25593"/>
        <dbReference type="ChEBI" id="CHEBI:15378"/>
        <dbReference type="ChEBI" id="CHEBI:16526"/>
        <dbReference type="ChEBI" id="CHEBI:16810"/>
        <dbReference type="ChEBI" id="CHEBI:29780"/>
        <dbReference type="ChEBI" id="CHEBI:58818"/>
        <dbReference type="EC" id="2.2.1.9"/>
    </reaction>
</comment>
<comment type="cofactor">
    <cofactor evidence="1">
        <name>Mg(2+)</name>
        <dbReference type="ChEBI" id="CHEBI:18420"/>
    </cofactor>
    <cofactor evidence="1">
        <name>Mn(2+)</name>
        <dbReference type="ChEBI" id="CHEBI:29035"/>
    </cofactor>
</comment>
<comment type="cofactor">
    <cofactor evidence="1">
        <name>thiamine diphosphate</name>
        <dbReference type="ChEBI" id="CHEBI:58937"/>
    </cofactor>
    <text evidence="1">Binds 1 thiamine pyrophosphate per subunit.</text>
</comment>
<comment type="pathway">
    <text evidence="1">Quinol/quinone metabolism; 1,4-dihydroxy-2-naphthoate biosynthesis; 1,4-dihydroxy-2-naphthoate from chorismate: step 2/7.</text>
</comment>
<comment type="pathway">
    <text evidence="1">Quinol/quinone metabolism; menaquinone biosynthesis.</text>
</comment>
<comment type="subunit">
    <text evidence="1">Homodimer.</text>
</comment>
<comment type="similarity">
    <text evidence="1">Belongs to the TPP enzyme family. MenD subfamily.</text>
</comment>
<comment type="sequence caution" evidence="2">
    <conflict type="erroneous initiation">
        <sequence resource="EMBL-CDS" id="ABE08015"/>
    </conflict>
</comment>
<reference key="1">
    <citation type="journal article" date="2006" name="Proc. Natl. Acad. Sci. U.S.A.">
        <title>Identification of genes subject to positive selection in uropathogenic strains of Escherichia coli: a comparative genomics approach.</title>
        <authorList>
            <person name="Chen S.L."/>
            <person name="Hung C.-S."/>
            <person name="Xu J."/>
            <person name="Reigstad C.S."/>
            <person name="Magrini V."/>
            <person name="Sabo A."/>
            <person name="Blasiar D."/>
            <person name="Bieri T."/>
            <person name="Meyer R.R."/>
            <person name="Ozersky P."/>
            <person name="Armstrong J.R."/>
            <person name="Fulton R.S."/>
            <person name="Latreille J.P."/>
            <person name="Spieth J."/>
            <person name="Hooton T.M."/>
            <person name="Mardis E.R."/>
            <person name="Hultgren S.J."/>
            <person name="Gordon J.I."/>
        </authorList>
    </citation>
    <scope>NUCLEOTIDE SEQUENCE [LARGE SCALE GENOMIC DNA]</scope>
    <source>
        <strain>UTI89 / UPEC</strain>
    </source>
</reference>
<protein>
    <recommendedName>
        <fullName evidence="1">2-succinyl-5-enolpyruvyl-6-hydroxy-3-cyclohexene-1-carboxylate synthase</fullName>
        <shortName evidence="1">SEPHCHC synthase</shortName>
        <ecNumber evidence="1">2.2.1.9</ecNumber>
    </recommendedName>
    <alternativeName>
        <fullName evidence="1">Menaquinone biosynthesis protein MenD</fullName>
    </alternativeName>
</protein>
<feature type="chain" id="PRO_0000341740" description="2-succinyl-5-enolpyruvyl-6-hydroxy-3-cyclohexene-1-carboxylate synthase">
    <location>
        <begin position="1"/>
        <end position="556"/>
    </location>
</feature>
<gene>
    <name evidence="1" type="primary">menD</name>
    <name type="ordered locus">UTI89_C2548</name>
</gene>
<keyword id="KW-0460">Magnesium</keyword>
<keyword id="KW-0464">Manganese</keyword>
<keyword id="KW-0474">Menaquinone biosynthesis</keyword>
<keyword id="KW-0479">Metal-binding</keyword>
<keyword id="KW-0786">Thiamine pyrophosphate</keyword>
<keyword id="KW-0808">Transferase</keyword>
<name>MEND_ECOUT</name>
<organism>
    <name type="scientific">Escherichia coli (strain UTI89 / UPEC)</name>
    <dbReference type="NCBI Taxonomy" id="364106"/>
    <lineage>
        <taxon>Bacteria</taxon>
        <taxon>Pseudomonadati</taxon>
        <taxon>Pseudomonadota</taxon>
        <taxon>Gammaproteobacteria</taxon>
        <taxon>Enterobacterales</taxon>
        <taxon>Enterobacteriaceae</taxon>
        <taxon>Escherichia</taxon>
    </lineage>
</organism>
<accession>Q1R9E9</accession>
<evidence type="ECO:0000255" key="1">
    <source>
        <dbReference type="HAMAP-Rule" id="MF_01659"/>
    </source>
</evidence>
<evidence type="ECO:0000305" key="2"/>
<sequence>MSVSAFNRRWAAVILEALTRHGVRHICIAPGSRSTPLTLAAAENSAFIHHTHFDERGLGHLALGLAKVSKQPVAVIVTSGTAVANLYPALIEAGLTGEKLILLTADRPPELIDCGANQAIRQPGMFASHPTHSISLPRPTQDIPARWLVSTIDHALGTLHAGGVHINCPFAEPLYGEMDDTGISWQQRLGDWWQDDKPWLREAPRRESEKQRDWFFWRQKRGVVVAGRMSAEEGKKVALWAQTLGWPLIGDVLSQTGQPLPCADLWLGNAKATSELQQAQIVVQLGSSLTGKRLLQWQASCEPEEYWIVDDIEGRLDPAHHRGRRLIANIADWLELHPAEKRQPWCVEIPRLAEQAMQAVIARRDAFGEAQLAHRISDYLPEQGQLFVGNSLVVRLIDALSQLPAGYPVYSNRGASGIDGLLSTAAGAQRASGKPTLAIVGDLSALYDLNALALLRQVSAPLVLIVVNNNGGQIFSLLPTPKSERERFYLMPQNVHFEHAAAMFELKYHRPQNWQELETTLVDAWRTPTTTVIEMVVNDTDGAQTLQQLLAQVSHL</sequence>